<accession>Q71ZW0</accession>
<reference key="1">
    <citation type="journal article" date="2004" name="Nucleic Acids Res.">
        <title>Whole genome comparisons of serotype 4b and 1/2a strains of the food-borne pathogen Listeria monocytogenes reveal new insights into the core genome components of this species.</title>
        <authorList>
            <person name="Nelson K.E."/>
            <person name="Fouts D.E."/>
            <person name="Mongodin E.F."/>
            <person name="Ravel J."/>
            <person name="DeBoy R.T."/>
            <person name="Kolonay J.F."/>
            <person name="Rasko D.A."/>
            <person name="Angiuoli S.V."/>
            <person name="Gill S.R."/>
            <person name="Paulsen I.T."/>
            <person name="Peterson J.D."/>
            <person name="White O."/>
            <person name="Nelson W.C."/>
            <person name="Nierman W.C."/>
            <person name="Beanan M.J."/>
            <person name="Brinkac L.M."/>
            <person name="Daugherty S.C."/>
            <person name="Dodson R.J."/>
            <person name="Durkin A.S."/>
            <person name="Madupu R."/>
            <person name="Haft D.H."/>
            <person name="Selengut J."/>
            <person name="Van Aken S.E."/>
            <person name="Khouri H.M."/>
            <person name="Fedorova N."/>
            <person name="Forberger H.A."/>
            <person name="Tran B."/>
            <person name="Kathariou S."/>
            <person name="Wonderling L.D."/>
            <person name="Uhlich G.A."/>
            <person name="Bayles D.O."/>
            <person name="Luchansky J.B."/>
            <person name="Fraser C.M."/>
        </authorList>
    </citation>
    <scope>NUCLEOTIDE SEQUENCE [LARGE SCALE GENOMIC DNA]</scope>
    <source>
        <strain>F2365</strain>
    </source>
</reference>
<dbReference type="EC" id="3.1.11.6" evidence="1"/>
<dbReference type="EMBL" id="AE017262">
    <property type="protein sequence ID" value="AAT04154.1"/>
    <property type="molecule type" value="Genomic_DNA"/>
</dbReference>
<dbReference type="RefSeq" id="WP_003722489.1">
    <property type="nucleotide sequence ID" value="NC_002973.6"/>
</dbReference>
<dbReference type="SMR" id="Q71ZW0"/>
<dbReference type="KEGG" id="lmf:LMOf2365_1379"/>
<dbReference type="HOGENOM" id="CLU_145918_3_1_9"/>
<dbReference type="GO" id="GO:0005829">
    <property type="term" value="C:cytosol"/>
    <property type="evidence" value="ECO:0007669"/>
    <property type="project" value="TreeGrafter"/>
</dbReference>
<dbReference type="GO" id="GO:0009318">
    <property type="term" value="C:exodeoxyribonuclease VII complex"/>
    <property type="evidence" value="ECO:0007669"/>
    <property type="project" value="InterPro"/>
</dbReference>
<dbReference type="GO" id="GO:0008855">
    <property type="term" value="F:exodeoxyribonuclease VII activity"/>
    <property type="evidence" value="ECO:0007669"/>
    <property type="project" value="UniProtKB-UniRule"/>
</dbReference>
<dbReference type="GO" id="GO:0006308">
    <property type="term" value="P:DNA catabolic process"/>
    <property type="evidence" value="ECO:0007669"/>
    <property type="project" value="UniProtKB-UniRule"/>
</dbReference>
<dbReference type="FunFam" id="1.10.287.1040:FF:000008">
    <property type="entry name" value="Exodeoxyribonuclease 7 small subunit"/>
    <property type="match status" value="1"/>
</dbReference>
<dbReference type="Gene3D" id="1.10.287.1040">
    <property type="entry name" value="Exonuclease VII, small subunit"/>
    <property type="match status" value="1"/>
</dbReference>
<dbReference type="HAMAP" id="MF_00337">
    <property type="entry name" value="Exonuc_7_S"/>
    <property type="match status" value="1"/>
</dbReference>
<dbReference type="InterPro" id="IPR003761">
    <property type="entry name" value="Exonuc_VII_S"/>
</dbReference>
<dbReference type="InterPro" id="IPR037004">
    <property type="entry name" value="Exonuc_VII_ssu_sf"/>
</dbReference>
<dbReference type="NCBIfam" id="NF002138">
    <property type="entry name" value="PRK00977.1-2"/>
    <property type="match status" value="1"/>
</dbReference>
<dbReference type="NCBIfam" id="NF002139">
    <property type="entry name" value="PRK00977.1-3"/>
    <property type="match status" value="1"/>
</dbReference>
<dbReference type="NCBIfam" id="NF002140">
    <property type="entry name" value="PRK00977.1-4"/>
    <property type="match status" value="1"/>
</dbReference>
<dbReference type="NCBIfam" id="NF010667">
    <property type="entry name" value="PRK14064.1"/>
    <property type="match status" value="1"/>
</dbReference>
<dbReference type="NCBIfam" id="TIGR01280">
    <property type="entry name" value="xseB"/>
    <property type="match status" value="1"/>
</dbReference>
<dbReference type="PANTHER" id="PTHR34137">
    <property type="entry name" value="EXODEOXYRIBONUCLEASE 7 SMALL SUBUNIT"/>
    <property type="match status" value="1"/>
</dbReference>
<dbReference type="PANTHER" id="PTHR34137:SF1">
    <property type="entry name" value="EXODEOXYRIBONUCLEASE 7 SMALL SUBUNIT"/>
    <property type="match status" value="1"/>
</dbReference>
<dbReference type="Pfam" id="PF02609">
    <property type="entry name" value="Exonuc_VII_S"/>
    <property type="match status" value="1"/>
</dbReference>
<dbReference type="PIRSF" id="PIRSF006488">
    <property type="entry name" value="Exonuc_VII_S"/>
    <property type="match status" value="1"/>
</dbReference>
<dbReference type="SUPFAM" id="SSF116842">
    <property type="entry name" value="XseB-like"/>
    <property type="match status" value="1"/>
</dbReference>
<organism>
    <name type="scientific">Listeria monocytogenes serotype 4b (strain F2365)</name>
    <dbReference type="NCBI Taxonomy" id="265669"/>
    <lineage>
        <taxon>Bacteria</taxon>
        <taxon>Bacillati</taxon>
        <taxon>Bacillota</taxon>
        <taxon>Bacilli</taxon>
        <taxon>Bacillales</taxon>
        <taxon>Listeriaceae</taxon>
        <taxon>Listeria</taxon>
    </lineage>
</organism>
<name>EX7S_LISMF</name>
<sequence length="75" mass="8267">MATKKKTFEEAIAELETIVEALENGSASLEDSLDMYQKGIELTKLCQDKLQSAEKRMAKVVTDAGEEIPFEADGE</sequence>
<protein>
    <recommendedName>
        <fullName evidence="1">Exodeoxyribonuclease 7 small subunit</fullName>
        <ecNumber evidence="1">3.1.11.6</ecNumber>
    </recommendedName>
    <alternativeName>
        <fullName evidence="1">Exodeoxyribonuclease VII small subunit</fullName>
        <shortName evidence="1">Exonuclease VII small subunit</shortName>
    </alternativeName>
</protein>
<proteinExistence type="inferred from homology"/>
<keyword id="KW-0963">Cytoplasm</keyword>
<keyword id="KW-0269">Exonuclease</keyword>
<keyword id="KW-0378">Hydrolase</keyword>
<keyword id="KW-0540">Nuclease</keyword>
<evidence type="ECO:0000255" key="1">
    <source>
        <dbReference type="HAMAP-Rule" id="MF_00337"/>
    </source>
</evidence>
<feature type="chain" id="PRO_0000206968" description="Exodeoxyribonuclease 7 small subunit">
    <location>
        <begin position="1"/>
        <end position="75"/>
    </location>
</feature>
<gene>
    <name evidence="1" type="primary">xseB</name>
    <name type="ordered locus">LMOf2365_1379</name>
</gene>
<comment type="function">
    <text evidence="1">Bidirectionally degrades single-stranded DNA into large acid-insoluble oligonucleotides, which are then degraded further into small acid-soluble oligonucleotides.</text>
</comment>
<comment type="catalytic activity">
    <reaction evidence="1">
        <text>Exonucleolytic cleavage in either 5'- to 3'- or 3'- to 5'-direction to yield nucleoside 5'-phosphates.</text>
        <dbReference type="EC" id="3.1.11.6"/>
    </reaction>
</comment>
<comment type="subunit">
    <text evidence="1">Heterooligomer composed of large and small subunits.</text>
</comment>
<comment type="subcellular location">
    <subcellularLocation>
        <location evidence="1">Cytoplasm</location>
    </subcellularLocation>
</comment>
<comment type="similarity">
    <text evidence="1">Belongs to the XseB family.</text>
</comment>